<reference key="1">
    <citation type="journal article" date="2009" name="J. Bacteriol.">
        <title>Role of conjugative elements in the evolution of the multidrug-resistant pandemic clone Streptococcus pneumoniae Spain23F ST81.</title>
        <authorList>
            <person name="Croucher N.J."/>
            <person name="Walker D."/>
            <person name="Romero P."/>
            <person name="Lennard N."/>
            <person name="Paterson G.K."/>
            <person name="Bason N.C."/>
            <person name="Mitchell A.M."/>
            <person name="Quail M.A."/>
            <person name="Andrew P.W."/>
            <person name="Parkhill J."/>
            <person name="Bentley S.D."/>
            <person name="Mitchell T.J."/>
        </authorList>
    </citation>
    <scope>NUCLEOTIDE SEQUENCE [LARGE SCALE GENOMIC DNA]</scope>
    <source>
        <strain>ATCC 700669 / Spain 23F-1</strain>
    </source>
</reference>
<keyword id="KW-0687">Ribonucleoprotein</keyword>
<keyword id="KW-0689">Ribosomal protein</keyword>
<feature type="chain" id="PRO_1000184162" description="Large ribosomal subunit protein uL30">
    <location>
        <begin position="1"/>
        <end position="60"/>
    </location>
</feature>
<accession>B8ZKP8</accession>
<name>RL30_STRPJ</name>
<protein>
    <recommendedName>
        <fullName evidence="1">Large ribosomal subunit protein uL30</fullName>
    </recommendedName>
    <alternativeName>
        <fullName evidence="2">50S ribosomal protein L30</fullName>
    </alternativeName>
</protein>
<proteinExistence type="inferred from homology"/>
<gene>
    <name evidence="1" type="primary">rpmD</name>
    <name type="ordered locus">SPN23F02170</name>
</gene>
<sequence>MAQIKITLTKSPIGRIPSQRKTVVALGLGKLNSSVIKEDNAAIRGMITAVSHLVTVEEVN</sequence>
<organism>
    <name type="scientific">Streptococcus pneumoniae (strain ATCC 700669 / Spain 23F-1)</name>
    <dbReference type="NCBI Taxonomy" id="561276"/>
    <lineage>
        <taxon>Bacteria</taxon>
        <taxon>Bacillati</taxon>
        <taxon>Bacillota</taxon>
        <taxon>Bacilli</taxon>
        <taxon>Lactobacillales</taxon>
        <taxon>Streptococcaceae</taxon>
        <taxon>Streptococcus</taxon>
    </lineage>
</organism>
<evidence type="ECO:0000255" key="1">
    <source>
        <dbReference type="HAMAP-Rule" id="MF_01371"/>
    </source>
</evidence>
<evidence type="ECO:0000305" key="2"/>
<dbReference type="EMBL" id="FM211187">
    <property type="protein sequence ID" value="CAR68077.1"/>
    <property type="molecule type" value="Genomic_DNA"/>
</dbReference>
<dbReference type="RefSeq" id="WP_000057241.1">
    <property type="nucleotide sequence ID" value="NC_011900.1"/>
</dbReference>
<dbReference type="SMR" id="B8ZKP8"/>
<dbReference type="GeneID" id="93738975"/>
<dbReference type="KEGG" id="sne:SPN23F02170"/>
<dbReference type="HOGENOM" id="CLU_131047_2_1_9"/>
<dbReference type="GO" id="GO:0022625">
    <property type="term" value="C:cytosolic large ribosomal subunit"/>
    <property type="evidence" value="ECO:0007669"/>
    <property type="project" value="TreeGrafter"/>
</dbReference>
<dbReference type="GO" id="GO:0003735">
    <property type="term" value="F:structural constituent of ribosome"/>
    <property type="evidence" value="ECO:0007669"/>
    <property type="project" value="InterPro"/>
</dbReference>
<dbReference type="GO" id="GO:0006412">
    <property type="term" value="P:translation"/>
    <property type="evidence" value="ECO:0007669"/>
    <property type="project" value="UniProtKB-UniRule"/>
</dbReference>
<dbReference type="CDD" id="cd01658">
    <property type="entry name" value="Ribosomal_L30"/>
    <property type="match status" value="1"/>
</dbReference>
<dbReference type="FunFam" id="3.30.1390.20:FF:000001">
    <property type="entry name" value="50S ribosomal protein L30"/>
    <property type="match status" value="1"/>
</dbReference>
<dbReference type="Gene3D" id="3.30.1390.20">
    <property type="entry name" value="Ribosomal protein L30, ferredoxin-like fold domain"/>
    <property type="match status" value="1"/>
</dbReference>
<dbReference type="HAMAP" id="MF_01371_B">
    <property type="entry name" value="Ribosomal_uL30_B"/>
    <property type="match status" value="1"/>
</dbReference>
<dbReference type="InterPro" id="IPR036919">
    <property type="entry name" value="Ribo_uL30_ferredoxin-like_sf"/>
</dbReference>
<dbReference type="InterPro" id="IPR005996">
    <property type="entry name" value="Ribosomal_uL30_bac-type"/>
</dbReference>
<dbReference type="InterPro" id="IPR018038">
    <property type="entry name" value="Ribosomal_uL30_CS"/>
</dbReference>
<dbReference type="InterPro" id="IPR016082">
    <property type="entry name" value="Ribosomal_uL30_ferredoxin-like"/>
</dbReference>
<dbReference type="NCBIfam" id="TIGR01308">
    <property type="entry name" value="rpmD_bact"/>
    <property type="match status" value="1"/>
</dbReference>
<dbReference type="PANTHER" id="PTHR15892:SF2">
    <property type="entry name" value="LARGE RIBOSOMAL SUBUNIT PROTEIN UL30M"/>
    <property type="match status" value="1"/>
</dbReference>
<dbReference type="PANTHER" id="PTHR15892">
    <property type="entry name" value="MITOCHONDRIAL RIBOSOMAL PROTEIN L30"/>
    <property type="match status" value="1"/>
</dbReference>
<dbReference type="Pfam" id="PF00327">
    <property type="entry name" value="Ribosomal_L30"/>
    <property type="match status" value="1"/>
</dbReference>
<dbReference type="PIRSF" id="PIRSF002211">
    <property type="entry name" value="Ribosomal_L30_bac-type"/>
    <property type="match status" value="1"/>
</dbReference>
<dbReference type="SUPFAM" id="SSF55129">
    <property type="entry name" value="Ribosomal protein L30p/L7e"/>
    <property type="match status" value="1"/>
</dbReference>
<dbReference type="PROSITE" id="PS00634">
    <property type="entry name" value="RIBOSOMAL_L30"/>
    <property type="match status" value="1"/>
</dbReference>
<comment type="subunit">
    <text evidence="1">Part of the 50S ribosomal subunit.</text>
</comment>
<comment type="similarity">
    <text evidence="1">Belongs to the universal ribosomal protein uL30 family.</text>
</comment>